<organism>
    <name type="scientific">Aliivibrio fischeri (strain MJ11)</name>
    <name type="common">Vibrio fischeri</name>
    <dbReference type="NCBI Taxonomy" id="388396"/>
    <lineage>
        <taxon>Bacteria</taxon>
        <taxon>Pseudomonadati</taxon>
        <taxon>Pseudomonadota</taxon>
        <taxon>Gammaproteobacteria</taxon>
        <taxon>Vibrionales</taxon>
        <taxon>Vibrionaceae</taxon>
        <taxon>Aliivibrio</taxon>
    </lineage>
</organism>
<protein>
    <recommendedName>
        <fullName evidence="1">SsrA-binding protein</fullName>
    </recommendedName>
    <alternativeName>
        <fullName evidence="1">Small protein B</fullName>
    </alternativeName>
</protein>
<evidence type="ECO:0000255" key="1">
    <source>
        <dbReference type="HAMAP-Rule" id="MF_00023"/>
    </source>
</evidence>
<evidence type="ECO:0000256" key="2">
    <source>
        <dbReference type="SAM" id="MobiDB-lite"/>
    </source>
</evidence>
<proteinExistence type="inferred from homology"/>
<gene>
    <name evidence="1" type="primary">smpB</name>
    <name type="ordered locus">VFMJ11_2139</name>
</gene>
<sequence>MAKKKSKDKAGSNTIAMNKQARHEYFIDDEIEAGIELQGWEVKSLRSGKVNIAESYVYVRDGEIFISGMTITPLQAASTHVVANPTRIRKLLMSRKEIDNLIGRVNREGMTLVATTMYWVRSWAKIKVGVAKGKKLHDKRTDSKEKDWNRDKARIMKSSLR</sequence>
<accession>B5FA19</accession>
<dbReference type="EMBL" id="CP001139">
    <property type="protein sequence ID" value="ACH65524.1"/>
    <property type="molecule type" value="Genomic_DNA"/>
</dbReference>
<dbReference type="RefSeq" id="WP_005420639.1">
    <property type="nucleotide sequence ID" value="NC_011184.1"/>
</dbReference>
<dbReference type="SMR" id="B5FA19"/>
<dbReference type="KEGG" id="vfm:VFMJ11_2139"/>
<dbReference type="HOGENOM" id="CLU_108953_3_0_6"/>
<dbReference type="Proteomes" id="UP000001857">
    <property type="component" value="Chromosome I"/>
</dbReference>
<dbReference type="GO" id="GO:0005829">
    <property type="term" value="C:cytosol"/>
    <property type="evidence" value="ECO:0007669"/>
    <property type="project" value="TreeGrafter"/>
</dbReference>
<dbReference type="GO" id="GO:0003723">
    <property type="term" value="F:RNA binding"/>
    <property type="evidence" value="ECO:0007669"/>
    <property type="project" value="UniProtKB-UniRule"/>
</dbReference>
<dbReference type="GO" id="GO:0070929">
    <property type="term" value="P:trans-translation"/>
    <property type="evidence" value="ECO:0007669"/>
    <property type="project" value="UniProtKB-UniRule"/>
</dbReference>
<dbReference type="CDD" id="cd09294">
    <property type="entry name" value="SmpB"/>
    <property type="match status" value="1"/>
</dbReference>
<dbReference type="Gene3D" id="2.40.280.10">
    <property type="match status" value="1"/>
</dbReference>
<dbReference type="HAMAP" id="MF_00023">
    <property type="entry name" value="SmpB"/>
    <property type="match status" value="1"/>
</dbReference>
<dbReference type="InterPro" id="IPR023620">
    <property type="entry name" value="SmpB"/>
</dbReference>
<dbReference type="InterPro" id="IPR000037">
    <property type="entry name" value="SsrA-bd_prot"/>
</dbReference>
<dbReference type="InterPro" id="IPR020081">
    <property type="entry name" value="SsrA-bd_prot_CS"/>
</dbReference>
<dbReference type="NCBIfam" id="NF003843">
    <property type="entry name" value="PRK05422.1"/>
    <property type="match status" value="1"/>
</dbReference>
<dbReference type="NCBIfam" id="TIGR00086">
    <property type="entry name" value="smpB"/>
    <property type="match status" value="1"/>
</dbReference>
<dbReference type="PANTHER" id="PTHR30308:SF2">
    <property type="entry name" value="SSRA-BINDING PROTEIN"/>
    <property type="match status" value="1"/>
</dbReference>
<dbReference type="PANTHER" id="PTHR30308">
    <property type="entry name" value="TMRNA-BINDING COMPONENT OF TRANS-TRANSLATION TAGGING COMPLEX"/>
    <property type="match status" value="1"/>
</dbReference>
<dbReference type="Pfam" id="PF01668">
    <property type="entry name" value="SmpB"/>
    <property type="match status" value="1"/>
</dbReference>
<dbReference type="SUPFAM" id="SSF74982">
    <property type="entry name" value="Small protein B (SmpB)"/>
    <property type="match status" value="1"/>
</dbReference>
<dbReference type="PROSITE" id="PS01317">
    <property type="entry name" value="SSRP"/>
    <property type="match status" value="1"/>
</dbReference>
<reference key="1">
    <citation type="submission" date="2008-08" db="EMBL/GenBank/DDBJ databases">
        <title>Complete sequence of Vibrio fischeri strain MJ11.</title>
        <authorList>
            <person name="Mandel M.J."/>
            <person name="Stabb E.V."/>
            <person name="Ruby E.G."/>
            <person name="Ferriera S."/>
            <person name="Johnson J."/>
            <person name="Kravitz S."/>
            <person name="Beeson K."/>
            <person name="Sutton G."/>
            <person name="Rogers Y.-H."/>
            <person name="Friedman R."/>
            <person name="Frazier M."/>
            <person name="Venter J.C."/>
        </authorList>
    </citation>
    <scope>NUCLEOTIDE SEQUENCE [LARGE SCALE GENOMIC DNA]</scope>
    <source>
        <strain>MJ11</strain>
    </source>
</reference>
<keyword id="KW-0963">Cytoplasm</keyword>
<keyword id="KW-0694">RNA-binding</keyword>
<feature type="chain" id="PRO_1000090198" description="SsrA-binding protein">
    <location>
        <begin position="1"/>
        <end position="161"/>
    </location>
</feature>
<feature type="region of interest" description="Disordered" evidence="2">
    <location>
        <begin position="138"/>
        <end position="161"/>
    </location>
</feature>
<feature type="compositionally biased region" description="Basic and acidic residues" evidence="2">
    <location>
        <begin position="139"/>
        <end position="154"/>
    </location>
</feature>
<name>SSRP_ALIFM</name>
<comment type="function">
    <text evidence="1">Required for rescue of stalled ribosomes mediated by trans-translation. Binds to transfer-messenger RNA (tmRNA), required for stable association of tmRNA with ribosomes. tmRNA and SmpB together mimic tRNA shape, replacing the anticodon stem-loop with SmpB. tmRNA is encoded by the ssrA gene; the 2 termini fold to resemble tRNA(Ala) and it encodes a 'tag peptide', a short internal open reading frame. During trans-translation Ala-aminoacylated tmRNA acts like a tRNA, entering the A-site of stalled ribosomes, displacing the stalled mRNA. The ribosome then switches to translate the ORF on the tmRNA; the nascent peptide is terminated with the 'tag peptide' encoded by the tmRNA and targeted for degradation. The ribosome is freed to recommence translation, which seems to be the essential function of trans-translation.</text>
</comment>
<comment type="subcellular location">
    <subcellularLocation>
        <location evidence="1">Cytoplasm</location>
    </subcellularLocation>
    <text evidence="1">The tmRNA-SmpB complex associates with stalled 70S ribosomes.</text>
</comment>
<comment type="similarity">
    <text evidence="1">Belongs to the SmpB family.</text>
</comment>